<accession>Q68XB2</accession>
<feature type="chain" id="PRO_0000286666" description="Ribosomal large subunit pseudouridine synthase C">
    <location>
        <begin position="1"/>
        <end position="303"/>
    </location>
</feature>
<feature type="domain" description="S4 RNA-binding" evidence="2">
    <location>
        <begin position="11"/>
        <end position="70"/>
    </location>
</feature>
<feature type="active site" evidence="1">
    <location>
        <position position="140"/>
    </location>
</feature>
<gene>
    <name type="primary">rluC</name>
    <name type="ordered locus">RT0249</name>
</gene>
<reference key="1">
    <citation type="journal article" date="2004" name="J. Bacteriol.">
        <title>Complete genome sequence of Rickettsia typhi and comparison with sequences of other Rickettsiae.</title>
        <authorList>
            <person name="McLeod M.P."/>
            <person name="Qin X."/>
            <person name="Karpathy S.E."/>
            <person name="Gioia J."/>
            <person name="Highlander S.K."/>
            <person name="Fox G.E."/>
            <person name="McNeill T.Z."/>
            <person name="Jiang H."/>
            <person name="Muzny D."/>
            <person name="Jacob L.S."/>
            <person name="Hawes A.C."/>
            <person name="Sodergren E."/>
            <person name="Gill R."/>
            <person name="Hume J."/>
            <person name="Morgan M."/>
            <person name="Fan G."/>
            <person name="Amin A.G."/>
            <person name="Gibbs R.A."/>
            <person name="Hong C."/>
            <person name="Yu X.-J."/>
            <person name="Walker D.H."/>
            <person name="Weinstock G.M."/>
        </authorList>
    </citation>
    <scope>NUCLEOTIDE SEQUENCE [LARGE SCALE GENOMIC DNA]</scope>
    <source>
        <strain>ATCC VR-144 / Wilmington</strain>
    </source>
</reference>
<comment type="function">
    <text evidence="1">Responsible for synthesis of pseudouridine from uracil at positions 955, 2504 and 2580 in 23S ribosomal RNA.</text>
</comment>
<comment type="catalytic activity">
    <reaction>
        <text>uridine(955/2504/2580) in 23S rRNA = pseudouridine(955/2504/2580) in 23S rRNA</text>
        <dbReference type="Rhea" id="RHEA:42528"/>
        <dbReference type="Rhea" id="RHEA-COMP:10099"/>
        <dbReference type="Rhea" id="RHEA-COMP:10100"/>
        <dbReference type="ChEBI" id="CHEBI:65314"/>
        <dbReference type="ChEBI" id="CHEBI:65315"/>
        <dbReference type="EC" id="5.4.99.24"/>
    </reaction>
</comment>
<comment type="similarity">
    <text evidence="3">Belongs to the pseudouridine synthase RluA family.</text>
</comment>
<keyword id="KW-0413">Isomerase</keyword>
<keyword id="KW-0694">RNA-binding</keyword>
<keyword id="KW-0698">rRNA processing</keyword>
<proteinExistence type="inferred from homology"/>
<organism>
    <name type="scientific">Rickettsia typhi (strain ATCC VR-144 / Wilmington)</name>
    <dbReference type="NCBI Taxonomy" id="257363"/>
    <lineage>
        <taxon>Bacteria</taxon>
        <taxon>Pseudomonadati</taxon>
        <taxon>Pseudomonadota</taxon>
        <taxon>Alphaproteobacteria</taxon>
        <taxon>Rickettsiales</taxon>
        <taxon>Rickettsiaceae</taxon>
        <taxon>Rickettsieae</taxon>
        <taxon>Rickettsia</taxon>
        <taxon>typhus group</taxon>
    </lineage>
</organism>
<dbReference type="EC" id="5.4.99.24"/>
<dbReference type="EMBL" id="AE017197">
    <property type="protein sequence ID" value="AAU03730.1"/>
    <property type="molecule type" value="Genomic_DNA"/>
</dbReference>
<dbReference type="RefSeq" id="WP_011190715.1">
    <property type="nucleotide sequence ID" value="NC_006142.1"/>
</dbReference>
<dbReference type="SMR" id="Q68XB2"/>
<dbReference type="KEGG" id="rty:RT0249"/>
<dbReference type="eggNOG" id="COG0564">
    <property type="taxonomic scope" value="Bacteria"/>
</dbReference>
<dbReference type="HOGENOM" id="CLU_016902_1_2_5"/>
<dbReference type="OrthoDB" id="9807829at2"/>
<dbReference type="Proteomes" id="UP000000604">
    <property type="component" value="Chromosome"/>
</dbReference>
<dbReference type="GO" id="GO:0160141">
    <property type="term" value="F:23S rRNA pseudouridine(955/2504/2580) synthase activity"/>
    <property type="evidence" value="ECO:0007669"/>
    <property type="project" value="UniProtKB-EC"/>
</dbReference>
<dbReference type="GO" id="GO:0003723">
    <property type="term" value="F:RNA binding"/>
    <property type="evidence" value="ECO:0007669"/>
    <property type="project" value="UniProtKB-KW"/>
</dbReference>
<dbReference type="GO" id="GO:0000455">
    <property type="term" value="P:enzyme-directed rRNA pseudouridine synthesis"/>
    <property type="evidence" value="ECO:0007669"/>
    <property type="project" value="UniProtKB-ARBA"/>
</dbReference>
<dbReference type="CDD" id="cd02869">
    <property type="entry name" value="PseudoU_synth_RluA_like"/>
    <property type="match status" value="1"/>
</dbReference>
<dbReference type="CDD" id="cd00165">
    <property type="entry name" value="S4"/>
    <property type="match status" value="1"/>
</dbReference>
<dbReference type="Gene3D" id="3.30.2350.10">
    <property type="entry name" value="Pseudouridine synthase"/>
    <property type="match status" value="1"/>
</dbReference>
<dbReference type="Gene3D" id="3.10.290.10">
    <property type="entry name" value="RNA-binding S4 domain"/>
    <property type="match status" value="1"/>
</dbReference>
<dbReference type="InterPro" id="IPR020103">
    <property type="entry name" value="PsdUridine_synth_cat_dom_sf"/>
</dbReference>
<dbReference type="InterPro" id="IPR006224">
    <property type="entry name" value="PsdUridine_synth_RluA-like_CS"/>
</dbReference>
<dbReference type="InterPro" id="IPR006145">
    <property type="entry name" value="PsdUridine_synth_RsuA/RluA"/>
</dbReference>
<dbReference type="InterPro" id="IPR050188">
    <property type="entry name" value="RluA_PseudoU_synthase"/>
</dbReference>
<dbReference type="InterPro" id="IPR002942">
    <property type="entry name" value="S4_RNA-bd"/>
</dbReference>
<dbReference type="InterPro" id="IPR036986">
    <property type="entry name" value="S4_RNA-bd_sf"/>
</dbReference>
<dbReference type="PANTHER" id="PTHR21600">
    <property type="entry name" value="MITOCHONDRIAL RNA PSEUDOURIDINE SYNTHASE"/>
    <property type="match status" value="1"/>
</dbReference>
<dbReference type="Pfam" id="PF00849">
    <property type="entry name" value="PseudoU_synth_2"/>
    <property type="match status" value="1"/>
</dbReference>
<dbReference type="Pfam" id="PF01479">
    <property type="entry name" value="S4"/>
    <property type="match status" value="1"/>
</dbReference>
<dbReference type="SMART" id="SM00363">
    <property type="entry name" value="S4"/>
    <property type="match status" value="1"/>
</dbReference>
<dbReference type="SUPFAM" id="SSF55174">
    <property type="entry name" value="Alpha-L RNA-binding motif"/>
    <property type="match status" value="1"/>
</dbReference>
<dbReference type="SUPFAM" id="SSF55120">
    <property type="entry name" value="Pseudouridine synthase"/>
    <property type="match status" value="1"/>
</dbReference>
<dbReference type="PROSITE" id="PS01129">
    <property type="entry name" value="PSI_RLU"/>
    <property type="match status" value="1"/>
</dbReference>
<dbReference type="PROSITE" id="PS50889">
    <property type="entry name" value="S4"/>
    <property type="match status" value="1"/>
</dbReference>
<evidence type="ECO:0000250" key="1"/>
<evidence type="ECO:0000255" key="2">
    <source>
        <dbReference type="PROSITE-ProRule" id="PRU00182"/>
    </source>
</evidence>
<evidence type="ECO:0000305" key="3"/>
<name>RLUC_RICTY</name>
<protein>
    <recommendedName>
        <fullName>Ribosomal large subunit pseudouridine synthase C</fullName>
        <ecNumber>5.4.99.24</ecNumber>
    </recommendedName>
    <alternativeName>
        <fullName>23S rRNA pseudouridine(955/2504/2580) synthase</fullName>
    </alternativeName>
    <alternativeName>
        <fullName>rRNA pseudouridylate synthase C</fullName>
    </alternativeName>
    <alternativeName>
        <fullName>rRNA-uridine isomerase C</fullName>
    </alternativeName>
</protein>
<sequence>MIIDVNTPIPFRLDKYLKRLYPSLTQGVIEKALRQKQVTVNFQKAEANLRVKEGDTIFINDYFNLPVTQHETLVFADAEIKLAKKILTDYLIYEDDHLIAINKPASLATQGGSKINLSIDSALKYLNYQGADFKLVHRLDKETSGLLLIAKNYLSSVKLHDAFKEKLVIKKYFAITYGRPVKNVGIVKSNIGKSKGRMFKITDIDSDNGKLAITYYKLLKSLNNNLFLIEFMPVTGRMHQLRLHAQLLGCPILGDDKYGNKEVMPYSKYMFLHANNIYLSESIVGKEIKLEAKLPFYFTRRLT</sequence>